<comment type="function">
    <text evidence="1">Catalyzes the conversion of 4-hydroxy-tetrahydrodipicolinate (HTPA) to tetrahydrodipicolinate.</text>
</comment>
<comment type="catalytic activity">
    <reaction evidence="1">
        <text>(S)-2,3,4,5-tetrahydrodipicolinate + NAD(+) + H2O = (2S,4S)-4-hydroxy-2,3,4,5-tetrahydrodipicolinate + NADH + H(+)</text>
        <dbReference type="Rhea" id="RHEA:35323"/>
        <dbReference type="ChEBI" id="CHEBI:15377"/>
        <dbReference type="ChEBI" id="CHEBI:15378"/>
        <dbReference type="ChEBI" id="CHEBI:16845"/>
        <dbReference type="ChEBI" id="CHEBI:57540"/>
        <dbReference type="ChEBI" id="CHEBI:57945"/>
        <dbReference type="ChEBI" id="CHEBI:67139"/>
        <dbReference type="EC" id="1.17.1.8"/>
    </reaction>
</comment>
<comment type="catalytic activity">
    <reaction evidence="1">
        <text>(S)-2,3,4,5-tetrahydrodipicolinate + NADP(+) + H2O = (2S,4S)-4-hydroxy-2,3,4,5-tetrahydrodipicolinate + NADPH + H(+)</text>
        <dbReference type="Rhea" id="RHEA:35331"/>
        <dbReference type="ChEBI" id="CHEBI:15377"/>
        <dbReference type="ChEBI" id="CHEBI:15378"/>
        <dbReference type="ChEBI" id="CHEBI:16845"/>
        <dbReference type="ChEBI" id="CHEBI:57783"/>
        <dbReference type="ChEBI" id="CHEBI:58349"/>
        <dbReference type="ChEBI" id="CHEBI:67139"/>
        <dbReference type="EC" id="1.17.1.8"/>
    </reaction>
</comment>
<comment type="pathway">
    <text evidence="1">Amino-acid biosynthesis; L-lysine biosynthesis via DAP pathway; (S)-tetrahydrodipicolinate from L-aspartate: step 4/4.</text>
</comment>
<comment type="subcellular location">
    <subcellularLocation>
        <location evidence="1">Cytoplasm</location>
    </subcellularLocation>
</comment>
<comment type="similarity">
    <text evidence="1">Belongs to the DapB family.</text>
</comment>
<comment type="caution">
    <text evidence="2">Was originally thought to be a dihydrodipicolinate reductase (DHDPR), catalyzing the conversion of dihydrodipicolinate to tetrahydrodipicolinate. However, it was shown in E.coli that the substrate of the enzymatic reaction is not dihydrodipicolinate (DHDP) but in fact (2S,4S)-4-hydroxy-2,3,4,5-tetrahydrodipicolinic acid (HTPA), the product released by the DapA-catalyzed reaction.</text>
</comment>
<sequence>MVRIAVAGAAGRMGRNLVKAAHHNPVAKVAAGSERPESSLVGVDLGELCGEGKFDVVVCDDLAKQIDQFDVIIDFTAPASTLNNLALCQQYGKSIVIGTTGFTEEQREQIDLVAQQVPVVMAPNYSVGVNLVFKLLEKAAKVMGDYCDIEIVEAHHRHKVDAPSGTAIGMGEAIAGAMGNKLSDVAVYAREGITGERTKDEIGFATIRAGDIVGEHTAMFADIGERVEITHKATDRMTFANGAVKAAVWLHEKPAGFYTMTDVLGLNDL</sequence>
<accession>Q8DEM0</accession>
<organism>
    <name type="scientific">Vibrio vulnificus (strain CMCP6)</name>
    <dbReference type="NCBI Taxonomy" id="216895"/>
    <lineage>
        <taxon>Bacteria</taxon>
        <taxon>Pseudomonadati</taxon>
        <taxon>Pseudomonadota</taxon>
        <taxon>Gammaproteobacteria</taxon>
        <taxon>Vibrionales</taxon>
        <taxon>Vibrionaceae</taxon>
        <taxon>Vibrio</taxon>
    </lineage>
</organism>
<gene>
    <name evidence="1" type="primary">dapB</name>
    <name type="ordered locus">VV1_0567</name>
</gene>
<feature type="chain" id="PRO_0000141506" description="4-hydroxy-tetrahydrodipicolinate reductase">
    <location>
        <begin position="1"/>
        <end position="269"/>
    </location>
</feature>
<feature type="active site" description="Proton donor/acceptor" evidence="1">
    <location>
        <position position="155"/>
    </location>
</feature>
<feature type="active site" description="Proton donor" evidence="1">
    <location>
        <position position="159"/>
    </location>
</feature>
<feature type="binding site" evidence="1">
    <location>
        <begin position="8"/>
        <end position="13"/>
    </location>
    <ligand>
        <name>NAD(+)</name>
        <dbReference type="ChEBI" id="CHEBI:57540"/>
    </ligand>
</feature>
<feature type="binding site" evidence="1">
    <location>
        <position position="34"/>
    </location>
    <ligand>
        <name>NAD(+)</name>
        <dbReference type="ChEBI" id="CHEBI:57540"/>
    </ligand>
</feature>
<feature type="binding site" evidence="1">
    <location>
        <position position="35"/>
    </location>
    <ligand>
        <name>NADP(+)</name>
        <dbReference type="ChEBI" id="CHEBI:58349"/>
    </ligand>
</feature>
<feature type="binding site" evidence="1">
    <location>
        <begin position="98"/>
        <end position="100"/>
    </location>
    <ligand>
        <name>NAD(+)</name>
        <dbReference type="ChEBI" id="CHEBI:57540"/>
    </ligand>
</feature>
<feature type="binding site" evidence="1">
    <location>
        <begin position="122"/>
        <end position="125"/>
    </location>
    <ligand>
        <name>NAD(+)</name>
        <dbReference type="ChEBI" id="CHEBI:57540"/>
    </ligand>
</feature>
<feature type="binding site" evidence="1">
    <location>
        <position position="156"/>
    </location>
    <ligand>
        <name>(S)-2,3,4,5-tetrahydrodipicolinate</name>
        <dbReference type="ChEBI" id="CHEBI:16845"/>
    </ligand>
</feature>
<feature type="binding site" evidence="1">
    <location>
        <begin position="165"/>
        <end position="166"/>
    </location>
    <ligand>
        <name>(S)-2,3,4,5-tetrahydrodipicolinate</name>
        <dbReference type="ChEBI" id="CHEBI:16845"/>
    </ligand>
</feature>
<feature type="strand" evidence="3">
    <location>
        <begin position="2"/>
        <end position="7"/>
    </location>
</feature>
<feature type="turn" evidence="3">
    <location>
        <begin position="8"/>
        <end position="10"/>
    </location>
</feature>
<feature type="helix" evidence="3">
    <location>
        <begin position="12"/>
        <end position="23"/>
    </location>
</feature>
<feature type="strand" evidence="3">
    <location>
        <begin position="27"/>
        <end position="33"/>
    </location>
</feature>
<feature type="turn" evidence="3">
    <location>
        <begin position="39"/>
        <end position="42"/>
    </location>
</feature>
<feature type="helix" evidence="3">
    <location>
        <begin position="46"/>
        <end position="48"/>
    </location>
</feature>
<feature type="strand" evidence="3">
    <location>
        <begin position="57"/>
        <end position="60"/>
    </location>
</feature>
<feature type="helix" evidence="3">
    <location>
        <begin position="62"/>
        <end position="68"/>
    </location>
</feature>
<feature type="strand" evidence="3">
    <location>
        <begin position="70"/>
        <end position="74"/>
    </location>
</feature>
<feature type="helix" evidence="3">
    <location>
        <begin position="78"/>
        <end position="91"/>
    </location>
</feature>
<feature type="strand" evidence="3">
    <location>
        <begin position="94"/>
        <end position="97"/>
    </location>
</feature>
<feature type="helix" evidence="3">
    <location>
        <begin position="104"/>
        <end position="113"/>
    </location>
</feature>
<feature type="turn" evidence="3">
    <location>
        <begin position="114"/>
        <end position="116"/>
    </location>
</feature>
<feature type="strand" evidence="3">
    <location>
        <begin position="117"/>
        <end position="121"/>
    </location>
</feature>
<feature type="helix" evidence="3">
    <location>
        <begin position="127"/>
        <end position="143"/>
    </location>
</feature>
<feature type="turn" evidence="3">
    <location>
        <begin position="144"/>
        <end position="146"/>
    </location>
</feature>
<feature type="strand" evidence="3">
    <location>
        <begin position="147"/>
        <end position="155"/>
    </location>
</feature>
<feature type="strand" evidence="3">
    <location>
        <begin position="161"/>
        <end position="163"/>
    </location>
</feature>
<feature type="helix" evidence="3">
    <location>
        <begin position="165"/>
        <end position="177"/>
    </location>
</feature>
<feature type="helix" evidence="3">
    <location>
        <begin position="182"/>
        <end position="185"/>
    </location>
</feature>
<feature type="strand" evidence="3">
    <location>
        <begin position="202"/>
        <end position="208"/>
    </location>
</feature>
<feature type="strand" evidence="3">
    <location>
        <begin position="214"/>
        <end position="221"/>
    </location>
</feature>
<feature type="strand" evidence="3">
    <location>
        <begin position="226"/>
        <end position="233"/>
    </location>
</feature>
<feature type="helix" evidence="3">
    <location>
        <begin position="237"/>
        <end position="250"/>
    </location>
</feature>
<feature type="strand" evidence="3">
    <location>
        <begin position="255"/>
        <end position="258"/>
    </location>
</feature>
<feature type="helix" evidence="3">
    <location>
        <begin position="260"/>
        <end position="264"/>
    </location>
</feature>
<keyword id="KW-0002">3D-structure</keyword>
<keyword id="KW-0028">Amino-acid biosynthesis</keyword>
<keyword id="KW-0963">Cytoplasm</keyword>
<keyword id="KW-0220">Diaminopimelate biosynthesis</keyword>
<keyword id="KW-0457">Lysine biosynthesis</keyword>
<keyword id="KW-0520">NAD</keyword>
<keyword id="KW-0521">NADP</keyword>
<keyword id="KW-0560">Oxidoreductase</keyword>
<name>DAPB_VIBVU</name>
<proteinExistence type="evidence at protein level"/>
<reference key="1">
    <citation type="submission" date="2002-12" db="EMBL/GenBank/DDBJ databases">
        <title>Complete genome sequence of Vibrio vulnificus CMCP6.</title>
        <authorList>
            <person name="Rhee J.H."/>
            <person name="Kim S.Y."/>
            <person name="Chung S.S."/>
            <person name="Kim J.J."/>
            <person name="Moon Y.H."/>
            <person name="Jeong H."/>
            <person name="Choy H.E."/>
        </authorList>
    </citation>
    <scope>NUCLEOTIDE SEQUENCE [LARGE SCALE GENOMIC DNA]</scope>
    <source>
        <strain>CMCP6</strain>
    </source>
</reference>
<evidence type="ECO:0000255" key="1">
    <source>
        <dbReference type="HAMAP-Rule" id="MF_00102"/>
    </source>
</evidence>
<evidence type="ECO:0000305" key="2"/>
<evidence type="ECO:0007829" key="3">
    <source>
        <dbReference type="PDB" id="5TEM"/>
    </source>
</evidence>
<dbReference type="EC" id="1.17.1.8" evidence="1"/>
<dbReference type="EMBL" id="AE016795">
    <property type="protein sequence ID" value="AAO09084.1"/>
    <property type="molecule type" value="Genomic_DNA"/>
</dbReference>
<dbReference type="RefSeq" id="WP_011078654.1">
    <property type="nucleotide sequence ID" value="NC_004459.3"/>
</dbReference>
<dbReference type="PDB" id="5TEJ">
    <property type="method" value="X-ray"/>
    <property type="resolution" value="2.50 A"/>
    <property type="chains" value="A/B/C/D=1-269"/>
</dbReference>
<dbReference type="PDB" id="5TEM">
    <property type="method" value="X-ray"/>
    <property type="resolution" value="2.20 A"/>
    <property type="chains" value="A/C=1-269"/>
</dbReference>
<dbReference type="PDB" id="5TEN">
    <property type="method" value="X-ray"/>
    <property type="resolution" value="2.45 A"/>
    <property type="chains" value="A/B/C/D/E/F/G/H=1-269"/>
</dbReference>
<dbReference type="PDB" id="5US6">
    <property type="method" value="X-ray"/>
    <property type="resolution" value="2.61 A"/>
    <property type="chains" value="A/B/C/D/E/F/G/H/I/J/K/L=1-269"/>
</dbReference>
<dbReference type="PDBsum" id="5TEJ"/>
<dbReference type="PDBsum" id="5TEM"/>
<dbReference type="PDBsum" id="5TEN"/>
<dbReference type="PDBsum" id="5US6"/>
<dbReference type="SMR" id="Q8DEM0"/>
<dbReference type="KEGG" id="vvu:VV1_0567"/>
<dbReference type="HOGENOM" id="CLU_047479_2_1_6"/>
<dbReference type="UniPathway" id="UPA00034">
    <property type="reaction ID" value="UER00018"/>
</dbReference>
<dbReference type="Proteomes" id="UP000002275">
    <property type="component" value="Chromosome 1"/>
</dbReference>
<dbReference type="GO" id="GO:0005829">
    <property type="term" value="C:cytosol"/>
    <property type="evidence" value="ECO:0007669"/>
    <property type="project" value="TreeGrafter"/>
</dbReference>
<dbReference type="GO" id="GO:0008839">
    <property type="term" value="F:4-hydroxy-tetrahydrodipicolinate reductase"/>
    <property type="evidence" value="ECO:0007669"/>
    <property type="project" value="UniProtKB-EC"/>
</dbReference>
<dbReference type="GO" id="GO:0051287">
    <property type="term" value="F:NAD binding"/>
    <property type="evidence" value="ECO:0007669"/>
    <property type="project" value="UniProtKB-UniRule"/>
</dbReference>
<dbReference type="GO" id="GO:0050661">
    <property type="term" value="F:NADP binding"/>
    <property type="evidence" value="ECO:0007669"/>
    <property type="project" value="UniProtKB-UniRule"/>
</dbReference>
<dbReference type="GO" id="GO:0016726">
    <property type="term" value="F:oxidoreductase activity, acting on CH or CH2 groups, NAD or NADP as acceptor"/>
    <property type="evidence" value="ECO:0007669"/>
    <property type="project" value="UniProtKB-UniRule"/>
</dbReference>
<dbReference type="GO" id="GO:0019877">
    <property type="term" value="P:diaminopimelate biosynthetic process"/>
    <property type="evidence" value="ECO:0007669"/>
    <property type="project" value="UniProtKB-UniRule"/>
</dbReference>
<dbReference type="GO" id="GO:0009089">
    <property type="term" value="P:lysine biosynthetic process via diaminopimelate"/>
    <property type="evidence" value="ECO:0007669"/>
    <property type="project" value="UniProtKB-UniRule"/>
</dbReference>
<dbReference type="CDD" id="cd02274">
    <property type="entry name" value="DHDPR_N"/>
    <property type="match status" value="1"/>
</dbReference>
<dbReference type="FunFam" id="3.30.360.10:FF:000004">
    <property type="entry name" value="4-hydroxy-tetrahydrodipicolinate reductase"/>
    <property type="match status" value="1"/>
</dbReference>
<dbReference type="FunFam" id="3.40.50.720:FF:000048">
    <property type="entry name" value="4-hydroxy-tetrahydrodipicolinate reductase"/>
    <property type="match status" value="1"/>
</dbReference>
<dbReference type="Gene3D" id="3.30.360.10">
    <property type="entry name" value="Dihydrodipicolinate Reductase, domain 2"/>
    <property type="match status" value="1"/>
</dbReference>
<dbReference type="Gene3D" id="3.40.50.720">
    <property type="entry name" value="NAD(P)-binding Rossmann-like Domain"/>
    <property type="match status" value="1"/>
</dbReference>
<dbReference type="HAMAP" id="MF_00102">
    <property type="entry name" value="DapB"/>
    <property type="match status" value="1"/>
</dbReference>
<dbReference type="InterPro" id="IPR022663">
    <property type="entry name" value="DapB_C"/>
</dbReference>
<dbReference type="InterPro" id="IPR000846">
    <property type="entry name" value="DapB_N"/>
</dbReference>
<dbReference type="InterPro" id="IPR022664">
    <property type="entry name" value="DapB_N_CS"/>
</dbReference>
<dbReference type="InterPro" id="IPR023940">
    <property type="entry name" value="DHDPR_bac"/>
</dbReference>
<dbReference type="InterPro" id="IPR036291">
    <property type="entry name" value="NAD(P)-bd_dom_sf"/>
</dbReference>
<dbReference type="NCBIfam" id="TIGR00036">
    <property type="entry name" value="dapB"/>
    <property type="match status" value="1"/>
</dbReference>
<dbReference type="PANTHER" id="PTHR20836:SF0">
    <property type="entry name" value="4-HYDROXY-TETRAHYDRODIPICOLINATE REDUCTASE 1, CHLOROPLASTIC-RELATED"/>
    <property type="match status" value="1"/>
</dbReference>
<dbReference type="PANTHER" id="PTHR20836">
    <property type="entry name" value="DIHYDRODIPICOLINATE REDUCTASE"/>
    <property type="match status" value="1"/>
</dbReference>
<dbReference type="Pfam" id="PF05173">
    <property type="entry name" value="DapB_C"/>
    <property type="match status" value="1"/>
</dbReference>
<dbReference type="Pfam" id="PF01113">
    <property type="entry name" value="DapB_N"/>
    <property type="match status" value="1"/>
</dbReference>
<dbReference type="PIRSF" id="PIRSF000161">
    <property type="entry name" value="DHPR"/>
    <property type="match status" value="1"/>
</dbReference>
<dbReference type="SUPFAM" id="SSF55347">
    <property type="entry name" value="Glyceraldehyde-3-phosphate dehydrogenase-like, C-terminal domain"/>
    <property type="match status" value="1"/>
</dbReference>
<dbReference type="SUPFAM" id="SSF51735">
    <property type="entry name" value="NAD(P)-binding Rossmann-fold domains"/>
    <property type="match status" value="1"/>
</dbReference>
<dbReference type="PROSITE" id="PS01298">
    <property type="entry name" value="DAPB"/>
    <property type="match status" value="1"/>
</dbReference>
<protein>
    <recommendedName>
        <fullName evidence="1">4-hydroxy-tetrahydrodipicolinate reductase</fullName>
        <shortName evidence="1">HTPA reductase</shortName>
        <ecNumber evidence="1">1.17.1.8</ecNumber>
    </recommendedName>
</protein>